<evidence type="ECO:0000250" key="1">
    <source>
        <dbReference type="UniProtKB" id="Q8BS45"/>
    </source>
</evidence>
<evidence type="ECO:0000256" key="2">
    <source>
        <dbReference type="SAM" id="MobiDB-lite"/>
    </source>
</evidence>
<evidence type="ECO:0000269" key="3">
    <source>
    </source>
</evidence>
<evidence type="ECO:0000269" key="4">
    <source>
    </source>
</evidence>
<evidence type="ECO:0000303" key="5">
    <source>
    </source>
</evidence>
<evidence type="ECO:0000305" key="6"/>
<evidence type="ECO:0000305" key="7">
    <source>
    </source>
</evidence>
<keyword id="KW-0966">Cell projection</keyword>
<keyword id="KW-0969">Cilium</keyword>
<keyword id="KW-0653">Protein transport</keyword>
<keyword id="KW-1185">Reference proteome</keyword>
<keyword id="KW-0677">Repeat</keyword>
<keyword id="KW-0802">TPR repeat</keyword>
<keyword id="KW-0813">Transport</keyword>
<reference key="1">
    <citation type="journal article" date="2013" name="Nature">
        <title>The zebrafish reference genome sequence and its relationship to the human genome.</title>
        <authorList>
            <person name="Howe K."/>
            <person name="Clark M.D."/>
            <person name="Torroja C.F."/>
            <person name="Torrance J."/>
            <person name="Berthelot C."/>
            <person name="Muffato M."/>
            <person name="Collins J.E."/>
            <person name="Humphray S."/>
            <person name="McLaren K."/>
            <person name="Matthews L."/>
            <person name="McLaren S."/>
            <person name="Sealy I."/>
            <person name="Caccamo M."/>
            <person name="Churcher C."/>
            <person name="Scott C."/>
            <person name="Barrett J.C."/>
            <person name="Koch R."/>
            <person name="Rauch G.J."/>
            <person name="White S."/>
            <person name="Chow W."/>
            <person name="Kilian B."/>
            <person name="Quintais L.T."/>
            <person name="Guerra-Assuncao J.A."/>
            <person name="Zhou Y."/>
            <person name="Gu Y."/>
            <person name="Yen J."/>
            <person name="Vogel J.H."/>
            <person name="Eyre T."/>
            <person name="Redmond S."/>
            <person name="Banerjee R."/>
            <person name="Chi J."/>
            <person name="Fu B."/>
            <person name="Langley E."/>
            <person name="Maguire S.F."/>
            <person name="Laird G.K."/>
            <person name="Lloyd D."/>
            <person name="Kenyon E."/>
            <person name="Donaldson S."/>
            <person name="Sehra H."/>
            <person name="Almeida-King J."/>
            <person name="Loveland J."/>
            <person name="Trevanion S."/>
            <person name="Jones M."/>
            <person name="Quail M."/>
            <person name="Willey D."/>
            <person name="Hunt A."/>
            <person name="Burton J."/>
            <person name="Sims S."/>
            <person name="McLay K."/>
            <person name="Plumb B."/>
            <person name="Davis J."/>
            <person name="Clee C."/>
            <person name="Oliver K."/>
            <person name="Clark R."/>
            <person name="Riddle C."/>
            <person name="Elliot D."/>
            <person name="Threadgold G."/>
            <person name="Harden G."/>
            <person name="Ware D."/>
            <person name="Begum S."/>
            <person name="Mortimore B."/>
            <person name="Kerry G."/>
            <person name="Heath P."/>
            <person name="Phillimore B."/>
            <person name="Tracey A."/>
            <person name="Corby N."/>
            <person name="Dunn M."/>
            <person name="Johnson C."/>
            <person name="Wood J."/>
            <person name="Clark S."/>
            <person name="Pelan S."/>
            <person name="Griffiths G."/>
            <person name="Smith M."/>
            <person name="Glithero R."/>
            <person name="Howden P."/>
            <person name="Barker N."/>
            <person name="Lloyd C."/>
            <person name="Stevens C."/>
            <person name="Harley J."/>
            <person name="Holt K."/>
            <person name="Panagiotidis G."/>
            <person name="Lovell J."/>
            <person name="Beasley H."/>
            <person name="Henderson C."/>
            <person name="Gordon D."/>
            <person name="Auger K."/>
            <person name="Wright D."/>
            <person name="Collins J."/>
            <person name="Raisen C."/>
            <person name="Dyer L."/>
            <person name="Leung K."/>
            <person name="Robertson L."/>
            <person name="Ambridge K."/>
            <person name="Leongamornlert D."/>
            <person name="McGuire S."/>
            <person name="Gilderthorp R."/>
            <person name="Griffiths C."/>
            <person name="Manthravadi D."/>
            <person name="Nichol S."/>
            <person name="Barker G."/>
            <person name="Whitehead S."/>
            <person name="Kay M."/>
            <person name="Brown J."/>
            <person name="Murnane C."/>
            <person name="Gray E."/>
            <person name="Humphries M."/>
            <person name="Sycamore N."/>
            <person name="Barker D."/>
            <person name="Saunders D."/>
            <person name="Wallis J."/>
            <person name="Babbage A."/>
            <person name="Hammond S."/>
            <person name="Mashreghi-Mohammadi M."/>
            <person name="Barr L."/>
            <person name="Martin S."/>
            <person name="Wray P."/>
            <person name="Ellington A."/>
            <person name="Matthews N."/>
            <person name="Ellwood M."/>
            <person name="Woodmansey R."/>
            <person name="Clark G."/>
            <person name="Cooper J."/>
            <person name="Tromans A."/>
            <person name="Grafham D."/>
            <person name="Skuce C."/>
            <person name="Pandian R."/>
            <person name="Andrews R."/>
            <person name="Harrison E."/>
            <person name="Kimberley A."/>
            <person name="Garnett J."/>
            <person name="Fosker N."/>
            <person name="Hall R."/>
            <person name="Garner P."/>
            <person name="Kelly D."/>
            <person name="Bird C."/>
            <person name="Palmer S."/>
            <person name="Gehring I."/>
            <person name="Berger A."/>
            <person name="Dooley C.M."/>
            <person name="Ersan-Urun Z."/>
            <person name="Eser C."/>
            <person name="Geiger H."/>
            <person name="Geisler M."/>
            <person name="Karotki L."/>
            <person name="Kirn A."/>
            <person name="Konantz J."/>
            <person name="Konantz M."/>
            <person name="Oberlander M."/>
            <person name="Rudolph-Geiger S."/>
            <person name="Teucke M."/>
            <person name="Lanz C."/>
            <person name="Raddatz G."/>
            <person name="Osoegawa K."/>
            <person name="Zhu B."/>
            <person name="Rapp A."/>
            <person name="Widaa S."/>
            <person name="Langford C."/>
            <person name="Yang F."/>
            <person name="Schuster S.C."/>
            <person name="Carter N.P."/>
            <person name="Harrow J."/>
            <person name="Ning Z."/>
            <person name="Herrero J."/>
            <person name="Searle S.M."/>
            <person name="Enright A."/>
            <person name="Geisler R."/>
            <person name="Plasterk R.H."/>
            <person name="Lee C."/>
            <person name="Westerfield M."/>
            <person name="de Jong P.J."/>
            <person name="Zon L.I."/>
            <person name="Postlethwait J.H."/>
            <person name="Nusslein-Volhard C."/>
            <person name="Hubbard T.J."/>
            <person name="Roest Crollius H."/>
            <person name="Rogers J."/>
            <person name="Stemple D.L."/>
        </authorList>
    </citation>
    <scope>NUCLEOTIDE SEQUENCE [LARGE SCALE GENOMIC DNA]</scope>
    <source>
        <strain>Tuebingen</strain>
    </source>
</reference>
<reference key="2">
    <citation type="submission" date="2004-12" db="EMBL/GenBank/DDBJ databases">
        <authorList>
            <consortium name="NIH - Zebrafish Gene Collection (ZGC) project"/>
        </authorList>
    </citation>
    <scope>NUCLEOTIDE SEQUENCE [LARGE SCALE MRNA]</scope>
    <source>
        <tissue>Heart</tissue>
    </source>
</reference>
<reference key="3">
    <citation type="journal article" date="2012" name="Mol. Biol. Cell">
        <title>Knockdown of ttc26 disrupts ciliogenesis of the photoreceptor cells and the pronephros in zebrafish.</title>
        <authorList>
            <person name="Zhang Q."/>
            <person name="Liu Q."/>
            <person name="Austin C."/>
            <person name="Drummond I."/>
            <person name="Pierce E.A."/>
        </authorList>
    </citation>
    <scope>FUNCTION</scope>
    <scope>DISRUPTION PHENOTYPE</scope>
</reference>
<reference key="4">
    <citation type="journal article" date="2014" name="Elife">
        <title>TTC26/DYF13 is an intraflagellar transport protein required for transport of motility-related proteins into flagella.</title>
        <authorList>
            <person name="Ishikawa H."/>
            <person name="Ide T."/>
            <person name="Yagi T."/>
            <person name="Jiang X."/>
            <person name="Hirono M."/>
            <person name="Sasaki H."/>
            <person name="Yanagisawa H."/>
            <person name="Wemmer K.A."/>
            <person name="Stainier D.Y."/>
            <person name="Qin H."/>
            <person name="Kamiya R."/>
            <person name="Marshall W.F."/>
        </authorList>
    </citation>
    <scope>DISRUPTION PHENOTYPE</scope>
</reference>
<reference key="5">
    <citation type="journal article" date="2014" name="Elife">
        <authorList>
            <person name="Ishikawa H."/>
            <person name="Ide T."/>
            <person name="Yagi T."/>
            <person name="Jiang X."/>
            <person name="Hirono M."/>
            <person name="Sasaki H."/>
            <person name="Yanagisawa H."/>
            <person name="Wemmer K.A."/>
            <person name="Stainier D.Y."/>
            <person name="Qin H."/>
            <person name="Kamiya R."/>
            <person name="Marshall W.F."/>
        </authorList>
    </citation>
    <scope>ERRATUM OF PUBMED:24596149</scope>
</reference>
<protein>
    <recommendedName>
        <fullName evidence="5">Intraflagellar transport protein 56</fullName>
    </recommendedName>
    <alternativeName>
        <fullName>Tetratricopeptide repeat protein 26</fullName>
        <shortName>TPR repeat protein 26</shortName>
    </alternativeName>
</protein>
<dbReference type="EMBL" id="AL954384">
    <property type="status" value="NOT_ANNOTATED_CDS"/>
    <property type="molecule type" value="Genomic_DNA"/>
</dbReference>
<dbReference type="EMBL" id="BC086810">
    <property type="protein sequence ID" value="AAH86810.1"/>
    <property type="molecule type" value="mRNA"/>
</dbReference>
<dbReference type="RefSeq" id="NP_001008617.1">
    <property type="nucleotide sequence ID" value="NM_001008617.1"/>
</dbReference>
<dbReference type="SMR" id="Q5PR66"/>
<dbReference type="FunCoup" id="Q5PR66">
    <property type="interactions" value="1046"/>
</dbReference>
<dbReference type="STRING" id="7955.ENSDARP00000032176"/>
<dbReference type="PaxDb" id="7955-ENSDARP00000032176"/>
<dbReference type="Ensembl" id="ENSDART00000032494">
    <property type="protein sequence ID" value="ENSDARP00000032176"/>
    <property type="gene ID" value="ENSDARG00000012039"/>
</dbReference>
<dbReference type="GeneID" id="494074"/>
<dbReference type="KEGG" id="dre:494074"/>
<dbReference type="AGR" id="ZFIN:ZDB-GENE-041212-41"/>
<dbReference type="CTD" id="79989"/>
<dbReference type="ZFIN" id="ZDB-GENE-041212-41">
    <property type="gene designation" value="ift56"/>
</dbReference>
<dbReference type="eggNOG" id="KOG3785">
    <property type="taxonomic scope" value="Eukaryota"/>
</dbReference>
<dbReference type="HOGENOM" id="CLU_036306_2_0_1"/>
<dbReference type="InParanoid" id="Q5PR66"/>
<dbReference type="OMA" id="FIIRRDY"/>
<dbReference type="OrthoDB" id="95390at2759"/>
<dbReference type="PhylomeDB" id="Q5PR66"/>
<dbReference type="TreeFam" id="TF105816"/>
<dbReference type="PRO" id="PR:Q5PR66"/>
<dbReference type="Proteomes" id="UP000000437">
    <property type="component" value="Chromosome 6"/>
</dbReference>
<dbReference type="Bgee" id="ENSDARG00000012039">
    <property type="expression patterns" value="Expressed in testis and 35 other cell types or tissues"/>
</dbReference>
<dbReference type="GO" id="GO:0036064">
    <property type="term" value="C:ciliary basal body"/>
    <property type="evidence" value="ECO:0000318"/>
    <property type="project" value="GO_Central"/>
</dbReference>
<dbReference type="GO" id="GO:0097546">
    <property type="term" value="C:ciliary base"/>
    <property type="evidence" value="ECO:0000318"/>
    <property type="project" value="GO_Central"/>
</dbReference>
<dbReference type="GO" id="GO:0005929">
    <property type="term" value="C:cilium"/>
    <property type="evidence" value="ECO:0000250"/>
    <property type="project" value="UniProtKB"/>
</dbReference>
<dbReference type="GO" id="GO:0030992">
    <property type="term" value="C:intraciliary transport particle B"/>
    <property type="evidence" value="ECO:0000250"/>
    <property type="project" value="UniProtKB"/>
</dbReference>
<dbReference type="GO" id="GO:0120170">
    <property type="term" value="F:intraciliary transport particle B binding"/>
    <property type="evidence" value="ECO:0000318"/>
    <property type="project" value="GO_Central"/>
</dbReference>
<dbReference type="GO" id="GO:0035082">
    <property type="term" value="P:axoneme assembly"/>
    <property type="evidence" value="ECO:0000250"/>
    <property type="project" value="UniProtKB"/>
</dbReference>
<dbReference type="GO" id="GO:0060271">
    <property type="term" value="P:cilium assembly"/>
    <property type="evidence" value="ECO:0000314"/>
    <property type="project" value="MGI"/>
</dbReference>
<dbReference type="GO" id="GO:0035720">
    <property type="term" value="P:intraciliary anterograde transport"/>
    <property type="evidence" value="ECO:0000318"/>
    <property type="project" value="GO_Central"/>
</dbReference>
<dbReference type="GO" id="GO:0042073">
    <property type="term" value="P:intraciliary transport"/>
    <property type="evidence" value="ECO:0000315"/>
    <property type="project" value="UniProtKB"/>
</dbReference>
<dbReference type="GO" id="GO:0035735">
    <property type="term" value="P:intraciliary transport involved in cilium assembly"/>
    <property type="evidence" value="ECO:0000318"/>
    <property type="project" value="GO_Central"/>
</dbReference>
<dbReference type="GO" id="GO:0046530">
    <property type="term" value="P:photoreceptor cell differentiation"/>
    <property type="evidence" value="ECO:0000314"/>
    <property type="project" value="MGI"/>
</dbReference>
<dbReference type="GO" id="GO:0008594">
    <property type="term" value="P:photoreceptor cell morphogenesis"/>
    <property type="evidence" value="ECO:0000314"/>
    <property type="project" value="MGI"/>
</dbReference>
<dbReference type="GO" id="GO:0035845">
    <property type="term" value="P:photoreceptor cell outer segment organization"/>
    <property type="evidence" value="ECO:0000315"/>
    <property type="project" value="ZFIN"/>
</dbReference>
<dbReference type="GO" id="GO:0039023">
    <property type="term" value="P:pronephric duct morphogenesis"/>
    <property type="evidence" value="ECO:0000315"/>
    <property type="project" value="ZFIN"/>
</dbReference>
<dbReference type="GO" id="GO:0061512">
    <property type="term" value="P:protein localization to cilium"/>
    <property type="evidence" value="ECO:0000250"/>
    <property type="project" value="UniProtKB"/>
</dbReference>
<dbReference type="GO" id="GO:0015031">
    <property type="term" value="P:protein transport"/>
    <property type="evidence" value="ECO:0007669"/>
    <property type="project" value="UniProtKB-KW"/>
</dbReference>
<dbReference type="GO" id="GO:0007224">
    <property type="term" value="P:smoothened signaling pathway"/>
    <property type="evidence" value="ECO:0000250"/>
    <property type="project" value="UniProtKB"/>
</dbReference>
<dbReference type="FunFam" id="1.25.40.10:FF:000588">
    <property type="entry name" value="Intraflagellar transport protein 56"/>
    <property type="match status" value="1"/>
</dbReference>
<dbReference type="FunFam" id="1.25.40.10:FF:000136">
    <property type="entry name" value="Tetratricopeptide repeat domain 26"/>
    <property type="match status" value="1"/>
</dbReference>
<dbReference type="FunFam" id="1.25.40.10:FF:000271">
    <property type="entry name" value="Tetratricopeptide repeat domain 26"/>
    <property type="match status" value="1"/>
</dbReference>
<dbReference type="Gene3D" id="1.25.40.10">
    <property type="entry name" value="Tetratricopeptide repeat domain"/>
    <property type="match status" value="3"/>
</dbReference>
<dbReference type="InterPro" id="IPR011990">
    <property type="entry name" value="TPR-like_helical_dom_sf"/>
</dbReference>
<dbReference type="InterPro" id="IPR019734">
    <property type="entry name" value="TPR_rpt"/>
</dbReference>
<dbReference type="InterPro" id="IPR030511">
    <property type="entry name" value="TTC26"/>
</dbReference>
<dbReference type="PANTHER" id="PTHR14781">
    <property type="entry name" value="INTRAFLAGELLAR TRANSPORT PROTEIN 56"/>
    <property type="match status" value="1"/>
</dbReference>
<dbReference type="PANTHER" id="PTHR14781:SF0">
    <property type="entry name" value="INTRAFLAGELLAR TRANSPORT PROTEIN 56"/>
    <property type="match status" value="1"/>
</dbReference>
<dbReference type="SMART" id="SM00028">
    <property type="entry name" value="TPR"/>
    <property type="match status" value="4"/>
</dbReference>
<dbReference type="SUPFAM" id="SSF48452">
    <property type="entry name" value="TPR-like"/>
    <property type="match status" value="3"/>
</dbReference>
<dbReference type="PROSITE" id="PS50293">
    <property type="entry name" value="TPR_REGION"/>
    <property type="match status" value="2"/>
</dbReference>
<organism>
    <name type="scientific">Danio rerio</name>
    <name type="common">Zebrafish</name>
    <name type="synonym">Brachydanio rerio</name>
    <dbReference type="NCBI Taxonomy" id="7955"/>
    <lineage>
        <taxon>Eukaryota</taxon>
        <taxon>Metazoa</taxon>
        <taxon>Chordata</taxon>
        <taxon>Craniata</taxon>
        <taxon>Vertebrata</taxon>
        <taxon>Euteleostomi</taxon>
        <taxon>Actinopterygii</taxon>
        <taxon>Neopterygii</taxon>
        <taxon>Teleostei</taxon>
        <taxon>Ostariophysi</taxon>
        <taxon>Cypriniformes</taxon>
        <taxon>Danionidae</taxon>
        <taxon>Danioninae</taxon>
        <taxon>Danio</taxon>
    </lineage>
</organism>
<sequence>MLLSRMKPAVGGEASTSSNEKKRKNKSKKIPRLEDYLNQRDYLGALTLLEFQRNSGVSVEHADLWTGFCAFHVGDHKRAMEEYKALTLRPDCPVDVWVYLGCALFFLGLYKEAEEAALKGSKTQLQNRLLFHLAHKFNDEKKLMGFHQNLEDVTEDQLSLASIHYMRSHYQEAIDIYKRILLQNREFLALNVYVALCYYKLDYYDVSQEVLAVYLQSIPDSTIALNLKACNHFRLYNGKAAETELKNLIDISSSSFQFAKELIQHNLVVFRGGEGALQVLPPLIDVISEARLNLVIYYLRQDDIQEAYKLIKDLEPTTPQEYILKGVVNAALGQEIGSRDHLKIAQQFFQLVGGSASECDTIPGRQCMASCFFLLKQFEDVLIYLNSVKSYFYNDDTFSFNYAQAKAALGNYREAEELFLLIQNEKIKSDYVFQSWLARCYIMNQKPRQAWELYLRMETSSDPFSLLQLIANDCYKMGQFYYAAKAFDALERLDPNPEYWEGKRGACVGIFQLILAGRESREILKEVLPMLRSTGNPQVEYIIRIMKKWAKDNRVAL</sequence>
<proteinExistence type="evidence at transcript level"/>
<accession>Q5PR66</accession>
<accession>F1QZ19</accession>
<feature type="chain" id="PRO_0000289086" description="Intraflagellar transport protein 56">
    <location>
        <begin position="1"/>
        <end position="557"/>
    </location>
</feature>
<feature type="repeat" description="TPR 1">
    <location>
        <begin position="60"/>
        <end position="93"/>
    </location>
</feature>
<feature type="repeat" description="TPR 2">
    <location>
        <begin position="95"/>
        <end position="128"/>
    </location>
</feature>
<feature type="repeat" description="TPR 3">
    <location>
        <begin position="154"/>
        <end position="187"/>
    </location>
</feature>
<feature type="repeat" description="TPR 4">
    <location>
        <begin position="471"/>
        <end position="504"/>
    </location>
</feature>
<feature type="region of interest" description="Disordered" evidence="2">
    <location>
        <begin position="1"/>
        <end position="30"/>
    </location>
</feature>
<feature type="compositionally biased region" description="Basic residues" evidence="2">
    <location>
        <begin position="21"/>
        <end position="30"/>
    </location>
</feature>
<feature type="sequence conflict" description="In Ref. 2; AAH86810." ref="2">
    <original>E</original>
    <variation>G</variation>
    <location>
        <position position="274"/>
    </location>
</feature>
<comment type="function">
    <text evidence="1 3 7">Component of the intraflagellar transport (IFT) complex B required for transport of proteins in the motile cilium. Required for transport of specific ciliary cargo proteins related to motility, while it is neither required for IFT complex B assembly or motion nor for cilium assembly. Plays a key role in maintaining the integrity of the IFT complex B and the proper ciliary localization of the IFT complex B components. Essential for maintaining proper microtubule organization within the ciliary axoneme (By similarity).</text>
</comment>
<comment type="subunit">
    <text evidence="1">Component of the IFT complex B.</text>
</comment>
<comment type="subcellular location">
    <subcellularLocation>
        <location evidence="1">Cell projection</location>
        <location evidence="1">Cilium</location>
    </subcellularLocation>
</comment>
<comment type="disruption phenotype">
    <text evidence="3 4">Defective cilia (PubMed:22718903, PubMed:24596149). Morpholino knockdown of the protein results in cilia defects in the pronephric kidney at 27 hpf and distension/dilation of pronephros at 5 dpf. In the eyes, the outer segments of photoreceptor cells appear shortened or absent, whereas cellular lamination seems normal in retinas at 5 dpf (PubMed:22718903). Left-right asymmetry defects with abnormal heart looping, hydrocephalus, pronephric cysts, abnormal ear otolith formation and curly body axis (PubMed:24596149).</text>
</comment>
<comment type="similarity">
    <text evidence="6">Belongs to the IFT56 family.</text>
</comment>
<name>IFT56_DANRE</name>
<gene>
    <name evidence="5" type="primary">ift56</name>
    <name type="synonym">ttc26</name>
    <name type="ORF">zgc:103412</name>
</gene>